<reference key="1">
    <citation type="journal article" date="2006" name="Genome Biol.">
        <title>The genome of Rhizobium leguminosarum has recognizable core and accessory components.</title>
        <authorList>
            <person name="Young J.P.W."/>
            <person name="Crossman L.C."/>
            <person name="Johnston A.W.B."/>
            <person name="Thomson N.R."/>
            <person name="Ghazoui Z.F."/>
            <person name="Hull K.H."/>
            <person name="Wexler M."/>
            <person name="Curson A.R.J."/>
            <person name="Todd J.D."/>
            <person name="Poole P.S."/>
            <person name="Mauchline T.H."/>
            <person name="East A.K."/>
            <person name="Quail M.A."/>
            <person name="Churcher C."/>
            <person name="Arrowsmith C."/>
            <person name="Cherevach I."/>
            <person name="Chillingworth T."/>
            <person name="Clarke K."/>
            <person name="Cronin A."/>
            <person name="Davis P."/>
            <person name="Fraser A."/>
            <person name="Hance Z."/>
            <person name="Hauser H."/>
            <person name="Jagels K."/>
            <person name="Moule S."/>
            <person name="Mungall K."/>
            <person name="Norbertczak H."/>
            <person name="Rabbinowitsch E."/>
            <person name="Sanders M."/>
            <person name="Simmonds M."/>
            <person name="Whitehead S."/>
            <person name="Parkhill J."/>
        </authorList>
    </citation>
    <scope>NUCLEOTIDE SEQUENCE [LARGE SCALE GENOMIC DNA]</scope>
    <source>
        <strain>DSM 114642 / LMG 32736 / 3841</strain>
    </source>
</reference>
<dbReference type="EC" id="2.4.1.21" evidence="1"/>
<dbReference type="EMBL" id="AM236080">
    <property type="protein sequence ID" value="CAK09606.1"/>
    <property type="molecule type" value="Genomic_DNA"/>
</dbReference>
<dbReference type="RefSeq" id="WP_011653525.1">
    <property type="nucleotide sequence ID" value="NC_008380.1"/>
</dbReference>
<dbReference type="SMR" id="Q1MBS7"/>
<dbReference type="CAZy" id="GT5">
    <property type="family name" value="Glycosyltransferase Family 5"/>
</dbReference>
<dbReference type="EnsemblBacteria" id="CAK09606">
    <property type="protein sequence ID" value="CAK09606"/>
    <property type="gene ID" value="RL4117"/>
</dbReference>
<dbReference type="KEGG" id="rle:RL4117"/>
<dbReference type="eggNOG" id="COG0297">
    <property type="taxonomic scope" value="Bacteria"/>
</dbReference>
<dbReference type="HOGENOM" id="CLU_009583_18_4_5"/>
<dbReference type="UniPathway" id="UPA00164"/>
<dbReference type="Proteomes" id="UP000006575">
    <property type="component" value="Chromosome"/>
</dbReference>
<dbReference type="GO" id="GO:0005829">
    <property type="term" value="C:cytosol"/>
    <property type="evidence" value="ECO:0007669"/>
    <property type="project" value="TreeGrafter"/>
</dbReference>
<dbReference type="GO" id="GO:0009011">
    <property type="term" value="F:alpha-1,4-glucan glucosyltransferase (ADP-glucose donor) activity"/>
    <property type="evidence" value="ECO:0007669"/>
    <property type="project" value="UniProtKB-UniRule"/>
</dbReference>
<dbReference type="GO" id="GO:0004373">
    <property type="term" value="F:alpha-1,4-glucan glucosyltransferase (UDP-glucose donor) activity"/>
    <property type="evidence" value="ECO:0007669"/>
    <property type="project" value="InterPro"/>
</dbReference>
<dbReference type="GO" id="GO:0005978">
    <property type="term" value="P:glycogen biosynthetic process"/>
    <property type="evidence" value="ECO:0007669"/>
    <property type="project" value="UniProtKB-UniRule"/>
</dbReference>
<dbReference type="CDD" id="cd03791">
    <property type="entry name" value="GT5_Glycogen_synthase_DULL1-like"/>
    <property type="match status" value="1"/>
</dbReference>
<dbReference type="Gene3D" id="3.40.50.2000">
    <property type="entry name" value="Glycogen Phosphorylase B"/>
    <property type="match status" value="2"/>
</dbReference>
<dbReference type="HAMAP" id="MF_00484">
    <property type="entry name" value="Glycogen_synth"/>
    <property type="match status" value="1"/>
</dbReference>
<dbReference type="InterPro" id="IPR001296">
    <property type="entry name" value="Glyco_trans_1"/>
</dbReference>
<dbReference type="InterPro" id="IPR011835">
    <property type="entry name" value="GS/SS"/>
</dbReference>
<dbReference type="InterPro" id="IPR013534">
    <property type="entry name" value="Starch_synth_cat_dom"/>
</dbReference>
<dbReference type="NCBIfam" id="TIGR02095">
    <property type="entry name" value="glgA"/>
    <property type="match status" value="1"/>
</dbReference>
<dbReference type="NCBIfam" id="NF001899">
    <property type="entry name" value="PRK00654.1-2"/>
    <property type="match status" value="1"/>
</dbReference>
<dbReference type="PANTHER" id="PTHR45825:SF11">
    <property type="entry name" value="ALPHA AMYLASE DOMAIN-CONTAINING PROTEIN"/>
    <property type="match status" value="1"/>
</dbReference>
<dbReference type="PANTHER" id="PTHR45825">
    <property type="entry name" value="GRANULE-BOUND STARCH SYNTHASE 1, CHLOROPLASTIC/AMYLOPLASTIC"/>
    <property type="match status" value="1"/>
</dbReference>
<dbReference type="Pfam" id="PF08323">
    <property type="entry name" value="Glyco_transf_5"/>
    <property type="match status" value="1"/>
</dbReference>
<dbReference type="Pfam" id="PF00534">
    <property type="entry name" value="Glycos_transf_1"/>
    <property type="match status" value="1"/>
</dbReference>
<dbReference type="SUPFAM" id="SSF53756">
    <property type="entry name" value="UDP-Glycosyltransferase/glycogen phosphorylase"/>
    <property type="match status" value="1"/>
</dbReference>
<protein>
    <recommendedName>
        <fullName evidence="1">Glycogen synthase</fullName>
        <ecNumber evidence="1">2.4.1.21</ecNumber>
    </recommendedName>
    <alternativeName>
        <fullName evidence="1">Starch [bacterial glycogen] synthase</fullName>
    </alternativeName>
</protein>
<proteinExistence type="inferred from homology"/>
<gene>
    <name evidence="1" type="primary">glgA</name>
    <name type="ordered locus">RL4117</name>
</gene>
<sequence>MKVLSVSSEVFPLIKTGGLADVSGALPIALKAFGVETKTLLPGYPAVMKVIRDAVIRLEFPDLLGERATVLEVQHEGLDLLILDAPAYYDRPGGPYLDPLGKDYPDNWRRFAALSLAASEIAAGLMPGWRPDLVHTHDWQAALTSVYMRYYPTPELPSVLTIHNIAFQGQFGSEIFAGLRLPAHAFTTESIEYYGTVGFLKGGLKTAHAITTVSPTYADEILTSEFGMGLEGVIASRVDDLHGIVNGIDTDIWNPATDPVVHTHYGQTTLKNREENRRSIAEFFGLDNDDAPIFCVISRLTWQKGMDIVANVADEIVAMGGKLVVLGSGEAALEGALLASASRHPGRVGVSIGYNEPMSHLMQAGCDAIIIPSRFEPCGLTQLYGLRYGCVPIVARTGGLNDTVIDANHAALAAKVATGIQFAPVTETGMLQAIRRAMHFYQDRKLWTQLQKQGMKSDVSWEKSAERYAALYSSLVSKGM</sequence>
<feature type="chain" id="PRO_1000014379" description="Glycogen synthase">
    <location>
        <begin position="1"/>
        <end position="480"/>
    </location>
</feature>
<feature type="binding site" evidence="1">
    <location>
        <position position="15"/>
    </location>
    <ligand>
        <name>ADP-alpha-D-glucose</name>
        <dbReference type="ChEBI" id="CHEBI:57498"/>
    </ligand>
</feature>
<organism>
    <name type="scientific">Rhizobium johnstonii (strain DSM 114642 / LMG 32736 / 3841)</name>
    <name type="common">Rhizobium leguminosarum bv. viciae</name>
    <dbReference type="NCBI Taxonomy" id="216596"/>
    <lineage>
        <taxon>Bacteria</taxon>
        <taxon>Pseudomonadati</taxon>
        <taxon>Pseudomonadota</taxon>
        <taxon>Alphaproteobacteria</taxon>
        <taxon>Hyphomicrobiales</taxon>
        <taxon>Rhizobiaceae</taxon>
        <taxon>Rhizobium/Agrobacterium group</taxon>
        <taxon>Rhizobium</taxon>
        <taxon>Rhizobium johnstonii</taxon>
    </lineage>
</organism>
<evidence type="ECO:0000255" key="1">
    <source>
        <dbReference type="HAMAP-Rule" id="MF_00484"/>
    </source>
</evidence>
<name>GLGA_RHIJ3</name>
<keyword id="KW-0320">Glycogen biosynthesis</keyword>
<keyword id="KW-0328">Glycosyltransferase</keyword>
<keyword id="KW-0808">Transferase</keyword>
<comment type="function">
    <text evidence="1">Synthesizes alpha-1,4-glucan chains using ADP-glucose.</text>
</comment>
<comment type="catalytic activity">
    <reaction evidence="1">
        <text>[(1-&gt;4)-alpha-D-glucosyl](n) + ADP-alpha-D-glucose = [(1-&gt;4)-alpha-D-glucosyl](n+1) + ADP + H(+)</text>
        <dbReference type="Rhea" id="RHEA:18189"/>
        <dbReference type="Rhea" id="RHEA-COMP:9584"/>
        <dbReference type="Rhea" id="RHEA-COMP:9587"/>
        <dbReference type="ChEBI" id="CHEBI:15378"/>
        <dbReference type="ChEBI" id="CHEBI:15444"/>
        <dbReference type="ChEBI" id="CHEBI:57498"/>
        <dbReference type="ChEBI" id="CHEBI:456216"/>
        <dbReference type="EC" id="2.4.1.21"/>
    </reaction>
</comment>
<comment type="pathway">
    <text evidence="1">Glycan biosynthesis; glycogen biosynthesis.</text>
</comment>
<comment type="similarity">
    <text evidence="1">Belongs to the glycosyltransferase 1 family. Bacterial/plant glycogen synthase subfamily.</text>
</comment>
<accession>Q1MBS7</accession>